<reference key="1">
    <citation type="journal article" date="2008" name="J. Bacteriol.">
        <title>The complete genome sequence of Escherichia coli DH10B: insights into the biology of a laboratory workhorse.</title>
        <authorList>
            <person name="Durfee T."/>
            <person name="Nelson R."/>
            <person name="Baldwin S."/>
            <person name="Plunkett G. III"/>
            <person name="Burland V."/>
            <person name="Mau B."/>
            <person name="Petrosino J.F."/>
            <person name="Qin X."/>
            <person name="Muzny D.M."/>
            <person name="Ayele M."/>
            <person name="Gibbs R.A."/>
            <person name="Csorgo B."/>
            <person name="Posfai G."/>
            <person name="Weinstock G.M."/>
            <person name="Blattner F.R."/>
        </authorList>
    </citation>
    <scope>NUCLEOTIDE SEQUENCE [LARGE SCALE GENOMIC DNA]</scope>
    <source>
        <strain>K12 / DH10B</strain>
    </source>
</reference>
<organism>
    <name type="scientific">Escherichia coli (strain K12 / DH10B)</name>
    <dbReference type="NCBI Taxonomy" id="316385"/>
    <lineage>
        <taxon>Bacteria</taxon>
        <taxon>Pseudomonadati</taxon>
        <taxon>Pseudomonadota</taxon>
        <taxon>Gammaproteobacteria</taxon>
        <taxon>Enterobacterales</taxon>
        <taxon>Enterobacteriaceae</taxon>
        <taxon>Escherichia</taxon>
    </lineage>
</organism>
<comment type="similarity">
    <text evidence="1">Belongs to the UPF0213 family.</text>
</comment>
<proteinExistence type="inferred from homology"/>
<gene>
    <name evidence="1" type="primary">yhbQ</name>
    <name type="ordered locus">ECDH10B_3328</name>
</gene>
<name>YHBQ_ECODH</name>
<evidence type="ECO:0000255" key="1">
    <source>
        <dbReference type="HAMAP-Rule" id="MF_01029"/>
    </source>
</evidence>
<protein>
    <recommendedName>
        <fullName evidence="1">UPF0213 protein YhbQ</fullName>
    </recommendedName>
</protein>
<accession>B1XGW7</accession>
<feature type="chain" id="PRO_1000135746" description="UPF0213 protein YhbQ">
    <location>
        <begin position="1"/>
        <end position="100"/>
    </location>
</feature>
<feature type="domain" description="GIY-YIG" evidence="1">
    <location>
        <begin position="2"/>
        <end position="77"/>
    </location>
</feature>
<sequence>MTPWFLYLIRTADNKLYTGITTDVERRYQQHQSGKGAKALRGKGELTLVFSAPVGDRSLALRAEYRVKQLTKRQKERLVAEGAGFAELLSSLQTPEIKSD</sequence>
<dbReference type="EMBL" id="CP000948">
    <property type="protein sequence ID" value="ACB04234.1"/>
    <property type="molecule type" value="Genomic_DNA"/>
</dbReference>
<dbReference type="RefSeq" id="WP_000189333.1">
    <property type="nucleotide sequence ID" value="NC_010473.1"/>
</dbReference>
<dbReference type="SMR" id="B1XGW7"/>
<dbReference type="KEGG" id="ecd:ECDH10B_3328"/>
<dbReference type="HOGENOM" id="CLU_135650_0_1_6"/>
<dbReference type="CDD" id="cd10456">
    <property type="entry name" value="GIY-YIG_UPF0213"/>
    <property type="match status" value="1"/>
</dbReference>
<dbReference type="FunFam" id="3.40.1440.10:FF:000002">
    <property type="entry name" value="UPF0213 protein YhbQ"/>
    <property type="match status" value="1"/>
</dbReference>
<dbReference type="Gene3D" id="3.40.1440.10">
    <property type="entry name" value="GIY-YIG endonuclease"/>
    <property type="match status" value="1"/>
</dbReference>
<dbReference type="HAMAP" id="MF_01029">
    <property type="entry name" value="UPF0213"/>
    <property type="match status" value="1"/>
</dbReference>
<dbReference type="InterPro" id="IPR000305">
    <property type="entry name" value="GIY-YIG_endonuc"/>
</dbReference>
<dbReference type="InterPro" id="IPR035901">
    <property type="entry name" value="GIY-YIG_endonuc_sf"/>
</dbReference>
<dbReference type="InterPro" id="IPR050190">
    <property type="entry name" value="UPF0213_domain"/>
</dbReference>
<dbReference type="InterPro" id="IPR022992">
    <property type="entry name" value="UPF0213_GIY-YIG_endonuc"/>
</dbReference>
<dbReference type="PANTHER" id="PTHR34477">
    <property type="entry name" value="UPF0213 PROTEIN YHBQ"/>
    <property type="match status" value="1"/>
</dbReference>
<dbReference type="PANTHER" id="PTHR34477:SF1">
    <property type="entry name" value="UPF0213 PROTEIN YHBQ"/>
    <property type="match status" value="1"/>
</dbReference>
<dbReference type="Pfam" id="PF01541">
    <property type="entry name" value="GIY-YIG"/>
    <property type="match status" value="1"/>
</dbReference>
<dbReference type="SMART" id="SM00465">
    <property type="entry name" value="GIYc"/>
    <property type="match status" value="1"/>
</dbReference>
<dbReference type="SUPFAM" id="SSF82771">
    <property type="entry name" value="GIY-YIG endonuclease"/>
    <property type="match status" value="1"/>
</dbReference>
<dbReference type="PROSITE" id="PS50164">
    <property type="entry name" value="GIY_YIG"/>
    <property type="match status" value="1"/>
</dbReference>